<protein>
    <recommendedName>
        <fullName evidence="1">tRNA1(Val) (adenine(37)-N6)-methyltransferase</fullName>
        <ecNumber evidence="1">2.1.1.223</ecNumber>
    </recommendedName>
    <alternativeName>
        <fullName evidence="1">tRNA m6A37 methyltransferase</fullName>
    </alternativeName>
</protein>
<accession>C6DC08</accession>
<keyword id="KW-0963">Cytoplasm</keyword>
<keyword id="KW-0489">Methyltransferase</keyword>
<keyword id="KW-0949">S-adenosyl-L-methionine</keyword>
<keyword id="KW-0808">Transferase</keyword>
<keyword id="KW-0819">tRNA processing</keyword>
<name>TRMN6_PECCP</name>
<reference key="1">
    <citation type="submission" date="2009-07" db="EMBL/GenBank/DDBJ databases">
        <title>Complete sequence of Pectobacterium carotovorum subsp. carotovorum PC1.</title>
        <authorList>
            <consortium name="US DOE Joint Genome Institute"/>
            <person name="Lucas S."/>
            <person name="Copeland A."/>
            <person name="Lapidus A."/>
            <person name="Glavina del Rio T."/>
            <person name="Tice H."/>
            <person name="Bruce D."/>
            <person name="Goodwin L."/>
            <person name="Pitluck S."/>
            <person name="Munk A.C."/>
            <person name="Brettin T."/>
            <person name="Detter J.C."/>
            <person name="Han C."/>
            <person name="Tapia R."/>
            <person name="Larimer F."/>
            <person name="Land M."/>
            <person name="Hauser L."/>
            <person name="Kyrpides N."/>
            <person name="Mikhailova N."/>
            <person name="Balakrishnan V."/>
            <person name="Glasner J."/>
            <person name="Perna N.T."/>
        </authorList>
    </citation>
    <scope>NUCLEOTIDE SEQUENCE [LARGE SCALE GENOMIC DNA]</scope>
    <source>
        <strain>PC1</strain>
    </source>
</reference>
<comment type="function">
    <text evidence="1">Specifically methylates the adenine in position 37 of tRNA(1)(Val) (anticodon cmo5UAC).</text>
</comment>
<comment type="catalytic activity">
    <reaction evidence="1">
        <text>adenosine(37) in tRNA1(Val) + S-adenosyl-L-methionine = N(6)-methyladenosine(37) in tRNA1(Val) + S-adenosyl-L-homocysteine + H(+)</text>
        <dbReference type="Rhea" id="RHEA:43160"/>
        <dbReference type="Rhea" id="RHEA-COMP:10369"/>
        <dbReference type="Rhea" id="RHEA-COMP:10370"/>
        <dbReference type="ChEBI" id="CHEBI:15378"/>
        <dbReference type="ChEBI" id="CHEBI:57856"/>
        <dbReference type="ChEBI" id="CHEBI:59789"/>
        <dbReference type="ChEBI" id="CHEBI:74411"/>
        <dbReference type="ChEBI" id="CHEBI:74449"/>
        <dbReference type="EC" id="2.1.1.223"/>
    </reaction>
</comment>
<comment type="subcellular location">
    <subcellularLocation>
        <location evidence="1">Cytoplasm</location>
    </subcellularLocation>
</comment>
<comment type="similarity">
    <text evidence="1">Belongs to the methyltransferase superfamily. tRNA (adenine-N(6)-)-methyltransferase family.</text>
</comment>
<dbReference type="EC" id="2.1.1.223" evidence="1"/>
<dbReference type="EMBL" id="CP001657">
    <property type="protein sequence ID" value="ACT14102.1"/>
    <property type="molecule type" value="Genomic_DNA"/>
</dbReference>
<dbReference type="SMR" id="C6DC08"/>
<dbReference type="STRING" id="561230.PC1_3079"/>
<dbReference type="KEGG" id="pct:PC1_3079"/>
<dbReference type="eggNOG" id="COG4123">
    <property type="taxonomic scope" value="Bacteria"/>
</dbReference>
<dbReference type="HOGENOM" id="CLU_061983_0_0_6"/>
<dbReference type="OrthoDB" id="5383291at2"/>
<dbReference type="Proteomes" id="UP000002736">
    <property type="component" value="Chromosome"/>
</dbReference>
<dbReference type="GO" id="GO:0005737">
    <property type="term" value="C:cytoplasm"/>
    <property type="evidence" value="ECO:0007669"/>
    <property type="project" value="UniProtKB-SubCell"/>
</dbReference>
<dbReference type="GO" id="GO:0003676">
    <property type="term" value="F:nucleic acid binding"/>
    <property type="evidence" value="ECO:0007669"/>
    <property type="project" value="InterPro"/>
</dbReference>
<dbReference type="GO" id="GO:0016430">
    <property type="term" value="F:tRNA (adenine-N6)-methyltransferase activity"/>
    <property type="evidence" value="ECO:0007669"/>
    <property type="project" value="UniProtKB-UniRule"/>
</dbReference>
<dbReference type="GO" id="GO:0032259">
    <property type="term" value="P:methylation"/>
    <property type="evidence" value="ECO:0007669"/>
    <property type="project" value="UniProtKB-KW"/>
</dbReference>
<dbReference type="GO" id="GO:0008033">
    <property type="term" value="P:tRNA processing"/>
    <property type="evidence" value="ECO:0007669"/>
    <property type="project" value="UniProtKB-UniRule"/>
</dbReference>
<dbReference type="CDD" id="cd02440">
    <property type="entry name" value="AdoMet_MTases"/>
    <property type="match status" value="1"/>
</dbReference>
<dbReference type="Gene3D" id="3.40.50.150">
    <property type="entry name" value="Vaccinia Virus protein VP39"/>
    <property type="match status" value="1"/>
</dbReference>
<dbReference type="HAMAP" id="MF_01872">
    <property type="entry name" value="tRNA_methyltr_YfiC"/>
    <property type="match status" value="1"/>
</dbReference>
<dbReference type="InterPro" id="IPR002052">
    <property type="entry name" value="DNA_methylase_N6_adenine_CS"/>
</dbReference>
<dbReference type="InterPro" id="IPR029063">
    <property type="entry name" value="SAM-dependent_MTases_sf"/>
</dbReference>
<dbReference type="InterPro" id="IPR007848">
    <property type="entry name" value="Small_mtfrase_dom"/>
</dbReference>
<dbReference type="InterPro" id="IPR050210">
    <property type="entry name" value="tRNA_Adenine-N(6)_MTase"/>
</dbReference>
<dbReference type="InterPro" id="IPR022882">
    <property type="entry name" value="tRNA_adenine-N6_MeTrfase"/>
</dbReference>
<dbReference type="NCBIfam" id="NF047853">
    <property type="entry name" value="tRm6a37MtseTrmN"/>
    <property type="match status" value="1"/>
</dbReference>
<dbReference type="PANTHER" id="PTHR47739">
    <property type="entry name" value="TRNA1(VAL) (ADENINE(37)-N6)-METHYLTRANSFERASE"/>
    <property type="match status" value="1"/>
</dbReference>
<dbReference type="PANTHER" id="PTHR47739:SF1">
    <property type="entry name" value="TRNA1(VAL) (ADENINE(37)-N6)-METHYLTRANSFERASE"/>
    <property type="match status" value="1"/>
</dbReference>
<dbReference type="Pfam" id="PF05175">
    <property type="entry name" value="MTS"/>
    <property type="match status" value="1"/>
</dbReference>
<dbReference type="SUPFAM" id="SSF53335">
    <property type="entry name" value="S-adenosyl-L-methionine-dependent methyltransferases"/>
    <property type="match status" value="1"/>
</dbReference>
<dbReference type="PROSITE" id="PS00092">
    <property type="entry name" value="N6_MTASE"/>
    <property type="match status" value="1"/>
</dbReference>
<organism>
    <name type="scientific">Pectobacterium carotovorum subsp. carotovorum (strain PC1)</name>
    <dbReference type="NCBI Taxonomy" id="561230"/>
    <lineage>
        <taxon>Bacteria</taxon>
        <taxon>Pseudomonadati</taxon>
        <taxon>Pseudomonadota</taxon>
        <taxon>Gammaproteobacteria</taxon>
        <taxon>Enterobacterales</taxon>
        <taxon>Pectobacteriaceae</taxon>
        <taxon>Pectobacterium</taxon>
    </lineage>
</organism>
<feature type="chain" id="PRO_0000387394" description="tRNA1(Val) (adenine(37)-N6)-methyltransferase">
    <location>
        <begin position="1"/>
        <end position="248"/>
    </location>
</feature>
<proteinExistence type="inferred from homology"/>
<evidence type="ECO:0000255" key="1">
    <source>
        <dbReference type="HAMAP-Rule" id="MF_01872"/>
    </source>
</evidence>
<sequence length="248" mass="27882">MSHQADNKLTLRRDGFTFKQFFVAHDRCAMKVGTDGILLGAWAPLSSVTRILDIGSGSGLLALMLAQRSDTHVRIDAVELDSAASQQAKENISASPWADRIAVYAEDIIDFADTRSADYSLIISNPPYFPPGIACGSAEREQARYTTLLTHETLLRCAHQLLMPDGLFCVVLPIQVAENFIPLAQQHNWYVHQQLRVSEQEDKPAHRVLLALSRQKKECVNASLAIRDEERRYSTAFQQLTKDFYLFM</sequence>
<gene>
    <name type="ordered locus">PC1_3079</name>
</gene>